<gene>
    <name evidence="1" type="primary">atpB</name>
</gene>
<protein>
    <recommendedName>
        <fullName evidence="1">A-type ATP synthase subunit B</fullName>
    </recommendedName>
</protein>
<proteinExistence type="inferred from homology"/>
<evidence type="ECO:0000255" key="1">
    <source>
        <dbReference type="HAMAP-Rule" id="MF_00310"/>
    </source>
</evidence>
<reference key="1">
    <citation type="journal article" date="1997" name="Biochim. Biophys. Acta">
        <title>Alpha- and beta-subunits of a V-type membrane ATPase in a hyperthermophilic sulfur-dependent archaeum, Thermococcus sp. KI.</title>
        <authorList>
            <person name="Iida T."/>
            <person name="Kanai S."/>
            <person name="Inatomi K."/>
            <person name="Kamagata Y."/>
            <person name="Maruyama T."/>
        </authorList>
    </citation>
    <scope>NUCLEOTIDE SEQUENCE [GENOMIC DNA]</scope>
</reference>
<comment type="function">
    <text evidence="1">Component of the A-type ATP synthase that produces ATP from ADP in the presence of a proton gradient across the membrane. The B chain is a regulatory subunit.</text>
</comment>
<comment type="subunit">
    <text evidence="1">Has multiple subunits with at least A(3), B(3), C, D, E, F, H, I and proteolipid K(x).</text>
</comment>
<comment type="subcellular location">
    <subcellularLocation>
        <location evidence="1">Cell membrane</location>
        <topology evidence="1">Peripheral membrane protein</topology>
    </subcellularLocation>
</comment>
<comment type="similarity">
    <text evidence="1">Belongs to the ATPase alpha/beta chains family.</text>
</comment>
<dbReference type="EMBL" id="D88772">
    <property type="protein sequence ID" value="BAA23343.1"/>
    <property type="molecule type" value="Genomic_DNA"/>
</dbReference>
<dbReference type="PIR" id="T44310">
    <property type="entry name" value="T44310"/>
</dbReference>
<dbReference type="SMR" id="O32467"/>
<dbReference type="GO" id="GO:0005886">
    <property type="term" value="C:plasma membrane"/>
    <property type="evidence" value="ECO:0007669"/>
    <property type="project" value="UniProtKB-SubCell"/>
</dbReference>
<dbReference type="GO" id="GO:0033178">
    <property type="term" value="C:proton-transporting two-sector ATPase complex, catalytic domain"/>
    <property type="evidence" value="ECO:0007669"/>
    <property type="project" value="InterPro"/>
</dbReference>
<dbReference type="GO" id="GO:0005524">
    <property type="term" value="F:ATP binding"/>
    <property type="evidence" value="ECO:0007669"/>
    <property type="project" value="UniProtKB-UniRule"/>
</dbReference>
<dbReference type="GO" id="GO:0046933">
    <property type="term" value="F:proton-transporting ATP synthase activity, rotational mechanism"/>
    <property type="evidence" value="ECO:0007669"/>
    <property type="project" value="UniProtKB-UniRule"/>
</dbReference>
<dbReference type="GO" id="GO:0042777">
    <property type="term" value="P:proton motive force-driven plasma membrane ATP synthesis"/>
    <property type="evidence" value="ECO:0007669"/>
    <property type="project" value="UniProtKB-UniRule"/>
</dbReference>
<dbReference type="CDD" id="cd18112">
    <property type="entry name" value="ATP-synt_V_A-type_beta_C"/>
    <property type="match status" value="1"/>
</dbReference>
<dbReference type="CDD" id="cd18118">
    <property type="entry name" value="ATP-synt_V_A-type_beta_N"/>
    <property type="match status" value="1"/>
</dbReference>
<dbReference type="CDD" id="cd01135">
    <property type="entry name" value="V_A-ATPase_B"/>
    <property type="match status" value="1"/>
</dbReference>
<dbReference type="Gene3D" id="3.40.50.12240">
    <property type="match status" value="1"/>
</dbReference>
<dbReference type="HAMAP" id="MF_00310">
    <property type="entry name" value="ATP_synth_B_arch"/>
    <property type="match status" value="1"/>
</dbReference>
<dbReference type="InterPro" id="IPR055190">
    <property type="entry name" value="ATP-synt_VA_C"/>
</dbReference>
<dbReference type="InterPro" id="IPR020003">
    <property type="entry name" value="ATPase_a/bsu_AS"/>
</dbReference>
<dbReference type="InterPro" id="IPR005724">
    <property type="entry name" value="ATPase_A1-cplx_bsu"/>
</dbReference>
<dbReference type="InterPro" id="IPR004100">
    <property type="entry name" value="ATPase_F1/V1/A1_a/bsu_N"/>
</dbReference>
<dbReference type="InterPro" id="IPR036121">
    <property type="entry name" value="ATPase_F1/V1/A1_a/bsu_N_sf"/>
</dbReference>
<dbReference type="InterPro" id="IPR000194">
    <property type="entry name" value="ATPase_F1/V1/A1_a/bsu_nucl-bd"/>
</dbReference>
<dbReference type="InterPro" id="IPR027417">
    <property type="entry name" value="P-loop_NTPase"/>
</dbReference>
<dbReference type="InterPro" id="IPR022879">
    <property type="entry name" value="V-ATPase_su_B/beta"/>
</dbReference>
<dbReference type="NCBIfam" id="TIGR01041">
    <property type="entry name" value="ATP_syn_B_arch"/>
    <property type="match status" value="1"/>
</dbReference>
<dbReference type="NCBIfam" id="NF003235">
    <property type="entry name" value="PRK04196.1"/>
    <property type="match status" value="1"/>
</dbReference>
<dbReference type="PANTHER" id="PTHR43389">
    <property type="entry name" value="V-TYPE PROTON ATPASE SUBUNIT B"/>
    <property type="match status" value="1"/>
</dbReference>
<dbReference type="PANTHER" id="PTHR43389:SF4">
    <property type="entry name" value="V-TYPE PROTON ATPASE SUBUNIT B"/>
    <property type="match status" value="1"/>
</dbReference>
<dbReference type="Pfam" id="PF00006">
    <property type="entry name" value="ATP-synt_ab"/>
    <property type="match status" value="1"/>
</dbReference>
<dbReference type="Pfam" id="PF02874">
    <property type="entry name" value="ATP-synt_ab_N"/>
    <property type="match status" value="1"/>
</dbReference>
<dbReference type="Pfam" id="PF22919">
    <property type="entry name" value="ATP-synt_VA_C"/>
    <property type="match status" value="1"/>
</dbReference>
<dbReference type="PIRSF" id="PIRSF039114">
    <property type="entry name" value="V-ATPsynth_beta/V-ATPase_B"/>
    <property type="match status" value="1"/>
</dbReference>
<dbReference type="SUPFAM" id="SSF47917">
    <property type="entry name" value="C-terminal domain of alpha and beta subunits of F1 ATP synthase"/>
    <property type="match status" value="1"/>
</dbReference>
<dbReference type="SUPFAM" id="SSF50615">
    <property type="entry name" value="N-terminal domain of alpha and beta subunits of F1 ATP synthase"/>
    <property type="match status" value="1"/>
</dbReference>
<dbReference type="SUPFAM" id="SSF52540">
    <property type="entry name" value="P-loop containing nucleoside triphosphate hydrolases"/>
    <property type="match status" value="1"/>
</dbReference>
<dbReference type="PROSITE" id="PS00152">
    <property type="entry name" value="ATPASE_ALPHA_BETA"/>
    <property type="match status" value="1"/>
</dbReference>
<accession>O32467</accession>
<feature type="chain" id="PRO_0000144670" description="A-type ATP synthase subunit B">
    <location>
        <begin position="1"/>
        <end position="463"/>
    </location>
</feature>
<name>AATB_THESI</name>
<organism>
    <name type="scientific">Thermococcus sp. (strain KI)</name>
    <dbReference type="NCBI Taxonomy" id="269443"/>
    <lineage>
        <taxon>Archaea</taxon>
        <taxon>Methanobacteriati</taxon>
        <taxon>Methanobacteriota</taxon>
        <taxon>Thermococci</taxon>
        <taxon>Thermococcales</taxon>
        <taxon>Thermococcaceae</taxon>
        <taxon>Thermococcus</taxon>
    </lineage>
</organism>
<sequence>MPGMEYSTVSKIYGPLMIVQGVKGVAYGEVVEIETESGEKRKGQVLEAREDMAIVQVFEGTRDLDIKTTRVRFTGETLKVPVSMDMLGRIFNGIGKPIDGGPEIIPEDRRDVHGAPLNPVARAYPRDFIQTGISAIDGMNTLVRGQKLPIFSGSGLPHNMLAAQIARQAKVLGEEEQFAVVFAAMGITYEEANFFKKSFEETGAIERAVLFLNLADDPAIERIITPRMALTVAEYLAFDYDMQVLVILTDMTNYAEALREISAAREEVPGRRGYPGYMYTDLATIYERAGRVRGKKGSITQMPILTMPDDDITHPIPDLTGYITEGQIVLSRELHRKGIYPPIDVLPSLSRLMKDGIGKGRTREDHPQLSQQLYAAYAEGRSLRDLVAVVGEEALSETDRKYLKFADRFEREFVAQRYDEDRSIFETLDLGWELLAELPESELKRVRKEYILKYHPKYRKRGE</sequence>
<keyword id="KW-0066">ATP synthesis</keyword>
<keyword id="KW-1003">Cell membrane</keyword>
<keyword id="KW-0375">Hydrogen ion transport</keyword>
<keyword id="KW-0406">Ion transport</keyword>
<keyword id="KW-0472">Membrane</keyword>
<keyword id="KW-0813">Transport</keyword>